<name>RUSD4_XENTR</name>
<dbReference type="EC" id="5.4.99.-" evidence="2"/>
<dbReference type="EMBL" id="CR942440">
    <property type="protein sequence ID" value="CAJ83700.1"/>
    <property type="molecule type" value="mRNA"/>
</dbReference>
<dbReference type="RefSeq" id="NP_001039205.1">
    <property type="nucleotide sequence ID" value="NM_001045740.1"/>
</dbReference>
<dbReference type="SMR" id="Q28C59"/>
<dbReference type="FunCoup" id="Q28C59">
    <property type="interactions" value="2231"/>
</dbReference>
<dbReference type="STRING" id="8364.ENSXETP00000031758"/>
<dbReference type="GeneID" id="734064"/>
<dbReference type="KEGG" id="xtr:734064"/>
<dbReference type="AGR" id="Xenbase:XB-GENE-6455737"/>
<dbReference type="CTD" id="84881"/>
<dbReference type="Xenbase" id="XB-GENE-6455737">
    <property type="gene designation" value="rpusd4"/>
</dbReference>
<dbReference type="InParanoid" id="Q28C59"/>
<dbReference type="OMA" id="AKKYWAI"/>
<dbReference type="OrthoDB" id="428658at2759"/>
<dbReference type="Proteomes" id="UP000008143">
    <property type="component" value="Chromosome 9"/>
</dbReference>
<dbReference type="GO" id="GO:0005759">
    <property type="term" value="C:mitochondrial matrix"/>
    <property type="evidence" value="ECO:0007669"/>
    <property type="project" value="UniProtKB-SubCell"/>
</dbReference>
<dbReference type="GO" id="GO:0005634">
    <property type="term" value="C:nucleus"/>
    <property type="evidence" value="ECO:0007669"/>
    <property type="project" value="UniProtKB-SubCell"/>
</dbReference>
<dbReference type="GO" id="GO:0003723">
    <property type="term" value="F:RNA binding"/>
    <property type="evidence" value="ECO:0007669"/>
    <property type="project" value="InterPro"/>
</dbReference>
<dbReference type="GO" id="GO:0106029">
    <property type="term" value="F:tRNA pseudouridine synthase activity"/>
    <property type="evidence" value="ECO:0007669"/>
    <property type="project" value="RHEA"/>
</dbReference>
<dbReference type="GO" id="GO:0006397">
    <property type="term" value="P:mRNA processing"/>
    <property type="evidence" value="ECO:0007669"/>
    <property type="project" value="UniProtKB-KW"/>
</dbReference>
<dbReference type="GO" id="GO:0001522">
    <property type="term" value="P:pseudouridine synthesis"/>
    <property type="evidence" value="ECO:0007669"/>
    <property type="project" value="InterPro"/>
</dbReference>
<dbReference type="GO" id="GO:0008380">
    <property type="term" value="P:RNA splicing"/>
    <property type="evidence" value="ECO:0007669"/>
    <property type="project" value="UniProtKB-KW"/>
</dbReference>
<dbReference type="GO" id="GO:0006364">
    <property type="term" value="P:rRNA processing"/>
    <property type="evidence" value="ECO:0007669"/>
    <property type="project" value="UniProtKB-KW"/>
</dbReference>
<dbReference type="GO" id="GO:0008033">
    <property type="term" value="P:tRNA processing"/>
    <property type="evidence" value="ECO:0007669"/>
    <property type="project" value="UniProtKB-KW"/>
</dbReference>
<dbReference type="CDD" id="cd02869">
    <property type="entry name" value="PseudoU_synth_RluA_like"/>
    <property type="match status" value="1"/>
</dbReference>
<dbReference type="FunFam" id="3.30.2350.10:FF:000015">
    <property type="entry name" value="Mitochondrial RNA pseudouridine synthase RPUSD4"/>
    <property type="match status" value="1"/>
</dbReference>
<dbReference type="Gene3D" id="3.30.2350.10">
    <property type="entry name" value="Pseudouridine synthase"/>
    <property type="match status" value="1"/>
</dbReference>
<dbReference type="InterPro" id="IPR020103">
    <property type="entry name" value="PsdUridine_synth_cat_dom_sf"/>
</dbReference>
<dbReference type="InterPro" id="IPR006224">
    <property type="entry name" value="PsdUridine_synth_RluA-like_CS"/>
</dbReference>
<dbReference type="InterPro" id="IPR006145">
    <property type="entry name" value="PsdUridine_synth_RsuA/RluA"/>
</dbReference>
<dbReference type="InterPro" id="IPR050188">
    <property type="entry name" value="RluA_PseudoU_synthase"/>
</dbReference>
<dbReference type="PANTHER" id="PTHR21600">
    <property type="entry name" value="MITOCHONDRIAL RNA PSEUDOURIDINE SYNTHASE"/>
    <property type="match status" value="1"/>
</dbReference>
<dbReference type="PANTHER" id="PTHR21600:SF83">
    <property type="entry name" value="PSEUDOURIDYLATE SYNTHASE RPUSD4, MITOCHONDRIAL"/>
    <property type="match status" value="1"/>
</dbReference>
<dbReference type="Pfam" id="PF00849">
    <property type="entry name" value="PseudoU_synth_2"/>
    <property type="match status" value="1"/>
</dbReference>
<dbReference type="SUPFAM" id="SSF55120">
    <property type="entry name" value="Pseudouridine synthase"/>
    <property type="match status" value="1"/>
</dbReference>
<dbReference type="PROSITE" id="PS01129">
    <property type="entry name" value="PSI_RLU"/>
    <property type="match status" value="1"/>
</dbReference>
<reference key="1">
    <citation type="submission" date="2006-10" db="EMBL/GenBank/DDBJ databases">
        <authorList>
            <consortium name="Sanger Xenopus tropicalis EST/cDNA project"/>
        </authorList>
    </citation>
    <scope>NUCLEOTIDE SEQUENCE [LARGE SCALE MRNA]</scope>
    <source>
        <tissue>Egg</tissue>
    </source>
</reference>
<keyword id="KW-0963">Cytoplasm</keyword>
<keyword id="KW-0413">Isomerase</keyword>
<keyword id="KW-0496">Mitochondrion</keyword>
<keyword id="KW-0507">mRNA processing</keyword>
<keyword id="KW-0508">mRNA splicing</keyword>
<keyword id="KW-0539">Nucleus</keyword>
<keyword id="KW-1185">Reference proteome</keyword>
<keyword id="KW-0698">rRNA processing</keyword>
<keyword id="KW-0809">Transit peptide</keyword>
<keyword id="KW-0819">tRNA processing</keyword>
<organism>
    <name type="scientific">Xenopus tropicalis</name>
    <name type="common">Western clawed frog</name>
    <name type="synonym">Silurana tropicalis</name>
    <dbReference type="NCBI Taxonomy" id="8364"/>
    <lineage>
        <taxon>Eukaryota</taxon>
        <taxon>Metazoa</taxon>
        <taxon>Chordata</taxon>
        <taxon>Craniata</taxon>
        <taxon>Vertebrata</taxon>
        <taxon>Euteleostomi</taxon>
        <taxon>Amphibia</taxon>
        <taxon>Batrachia</taxon>
        <taxon>Anura</taxon>
        <taxon>Pipoidea</taxon>
        <taxon>Pipidae</taxon>
        <taxon>Xenopodinae</taxon>
        <taxon>Xenopus</taxon>
        <taxon>Silurana</taxon>
    </lineage>
</organism>
<gene>
    <name evidence="2" type="primary">rpusd4</name>
    <name evidence="4" type="ORF">TEgg022l16.1</name>
</gene>
<feature type="transit peptide" description="Mitochondrion" evidence="3">
    <location>
        <begin position="1"/>
        <end position="11"/>
    </location>
</feature>
<feature type="chain" id="PRO_0000300829" description="Pseudouridylate synthase RPUSD4, mitochondrial">
    <location>
        <begin position="12"/>
        <end position="324"/>
    </location>
</feature>
<feature type="active site" evidence="1">
    <location>
        <position position="105"/>
    </location>
</feature>
<proteinExistence type="evidence at transcript level"/>
<protein>
    <recommendedName>
        <fullName evidence="5">Pseudouridylate synthase RPUSD4, mitochondrial</fullName>
        <ecNumber evidence="2">5.4.99.-</ecNumber>
    </recommendedName>
    <alternativeName>
        <fullName evidence="5">RNA pseudouridylate synthase domain-containing protein 4</fullName>
    </alternativeName>
</protein>
<evidence type="ECO:0000250" key="1">
    <source>
        <dbReference type="UniProtKB" id="P0AA39"/>
    </source>
</evidence>
<evidence type="ECO:0000250" key="2">
    <source>
        <dbReference type="UniProtKB" id="Q96CM3"/>
    </source>
</evidence>
<evidence type="ECO:0000255" key="3"/>
<evidence type="ECO:0000303" key="4">
    <source ref="1"/>
</evidence>
<evidence type="ECO:0000305" key="5"/>
<accession>Q28C59</accession>
<comment type="function">
    <text evidence="2">Catalyzes uridine to pseudouridine isomerization (pseudouridylation) of different mitochondrial RNA substrates. Acts on position 1397 in 16S mitochondrial ribosomal RNA (16S mt-rRNA). This modification is required for the assembly of 16S mt-rRNA into a functional mitochondrial ribosome. Acts on position 39 in mitochondrial tRNA(Phe). Also catalyzes pseudouridylation of mRNAs in nucleus: acts as a regulator of pre-mRNA splicing by mediating pseudouridylation of pre-mRNAs at locations associated with alternatively spliced regions. Pseudouridylation of pre-mRNAs near splice sites directly regulates mRNA splicing and mRNA 3'-end processing.</text>
</comment>
<comment type="catalytic activity">
    <reaction evidence="2">
        <text>uridine in 5S rRNA = pseudouridine in 5S rRNA</text>
        <dbReference type="Rhea" id="RHEA:47036"/>
        <dbReference type="Rhea" id="RHEA-COMP:11730"/>
        <dbReference type="Rhea" id="RHEA-COMP:11731"/>
        <dbReference type="ChEBI" id="CHEBI:65314"/>
        <dbReference type="ChEBI" id="CHEBI:65315"/>
    </reaction>
</comment>
<comment type="catalytic activity">
    <reaction evidence="2">
        <text>a uridine in tRNA = a pseudouridine in tRNA</text>
        <dbReference type="Rhea" id="RHEA:54572"/>
        <dbReference type="Rhea" id="RHEA-COMP:13339"/>
        <dbReference type="Rhea" id="RHEA-COMP:13934"/>
        <dbReference type="ChEBI" id="CHEBI:65314"/>
        <dbReference type="ChEBI" id="CHEBI:65315"/>
    </reaction>
</comment>
<comment type="catalytic activity">
    <reaction evidence="2">
        <text>a uridine in mRNA = a pseudouridine in mRNA</text>
        <dbReference type="Rhea" id="RHEA:56644"/>
        <dbReference type="Rhea" id="RHEA-COMP:14658"/>
        <dbReference type="Rhea" id="RHEA-COMP:14659"/>
        <dbReference type="ChEBI" id="CHEBI:65314"/>
        <dbReference type="ChEBI" id="CHEBI:65315"/>
    </reaction>
</comment>
<comment type="subcellular location">
    <subcellularLocation>
        <location evidence="2">Mitochondrion matrix</location>
    </subcellularLocation>
    <subcellularLocation>
        <location evidence="2">Nucleus</location>
    </subcellularLocation>
    <subcellularLocation>
        <location evidence="2">Cytoplasm</location>
    </subcellularLocation>
    <text evidence="2">Mainly localizes to mitochondrion. Localizes to mitochondrial RNA granules, platforms for post-transcriptional RNA modification and ribosome assembly. Also found in nucleus and cytoplasm.</text>
</comment>
<comment type="similarity">
    <text evidence="5">Belongs to the pseudouridine synthase RluA family.</text>
</comment>
<sequence length="324" mass="35724">MAAAGGGATRGARMLAERIRAERKVLEGAARETSRKNAPTIVYLRELKSQVVREDPELVLVNKPHGLPVHGGPTVERSVASLLPALAKHHFGWKAEPLKLCHRLDRDTTGALILARTTEAAERVQQALREREVHRVYWALCLGTPSPREGILDIPIMEKETSGPQKHYKMALSPRFRVSEEGAVERVRVPRSAHEAVTRYRTLGAASGASLVELHPITGVKHQLRVHLALGLNCPILGDHKYSHWGRLAPQKPPDSVLRALGLTVPQARTLSLHLHAVQLTLPSSDGSTPIVLQCPLPYTFRKTLRKLRIPPPDLESLQPPPTD</sequence>